<organism>
    <name type="scientific">Staphylococcus aureus (strain COL)</name>
    <dbReference type="NCBI Taxonomy" id="93062"/>
    <lineage>
        <taxon>Bacteria</taxon>
        <taxon>Bacillati</taxon>
        <taxon>Bacillota</taxon>
        <taxon>Bacilli</taxon>
        <taxon>Bacillales</taxon>
        <taxon>Staphylococcaceae</taxon>
        <taxon>Staphylococcus</taxon>
    </lineage>
</organism>
<protein>
    <recommendedName>
        <fullName evidence="1">Tyrosine recombinase XerD</fullName>
    </recommendedName>
</protein>
<sequence>METIIEEYLRFIQIEKGLSSNTIGAYRRDLKKYQDYMTEHHISHIDFIDRQLIQECLGHLIDQGQSAKSIARFISTIRSFHQFAIREKYAAKDPTVLLDSPKYDKKLPDVLNVDEVLALLETPDLNKINGYRDRTMLELLYATGMRVSELIHLELENVNLIMGFVRVFGKGDKERIVPLGDAVIEYLTTYIETIRPQLLKKTVTEVLFLNMHGKPLSRQAIWKMIKQNGVKANIKKTLTPHTLRHSFATHLLENGADLRAVQEMLGHSDISTTQLYTHVSKSQIRKMYNQFHPRA</sequence>
<reference key="1">
    <citation type="journal article" date="2005" name="J. Bacteriol.">
        <title>Insights on evolution of virulence and resistance from the complete genome analysis of an early methicillin-resistant Staphylococcus aureus strain and a biofilm-producing methicillin-resistant Staphylococcus epidermidis strain.</title>
        <authorList>
            <person name="Gill S.R."/>
            <person name="Fouts D.E."/>
            <person name="Archer G.L."/>
            <person name="Mongodin E.F."/>
            <person name="DeBoy R.T."/>
            <person name="Ravel J."/>
            <person name="Paulsen I.T."/>
            <person name="Kolonay J.F."/>
            <person name="Brinkac L.M."/>
            <person name="Beanan M.J."/>
            <person name="Dodson R.J."/>
            <person name="Daugherty S.C."/>
            <person name="Madupu R."/>
            <person name="Angiuoli S.V."/>
            <person name="Durkin A.S."/>
            <person name="Haft D.H."/>
            <person name="Vamathevan J.J."/>
            <person name="Khouri H."/>
            <person name="Utterback T.R."/>
            <person name="Lee C."/>
            <person name="Dimitrov G."/>
            <person name="Jiang L."/>
            <person name="Qin H."/>
            <person name="Weidman J."/>
            <person name="Tran K."/>
            <person name="Kang K.H."/>
            <person name="Hance I.R."/>
            <person name="Nelson K.E."/>
            <person name="Fraser C.M."/>
        </authorList>
    </citation>
    <scope>NUCLEOTIDE SEQUENCE [LARGE SCALE GENOMIC DNA]</scope>
    <source>
        <strain>COL</strain>
    </source>
</reference>
<proteinExistence type="inferred from homology"/>
<comment type="function">
    <text evidence="1">Site-specific tyrosine recombinase, which acts by catalyzing the cutting and rejoining of the recombining DNA molecules. The XerC-XerD complex is essential to convert dimers of the bacterial chromosome into monomers to permit their segregation at cell division. It also contributes to the segregational stability of plasmids.</text>
</comment>
<comment type="subunit">
    <text evidence="1">Forms a cyclic heterotetrameric complex composed of two molecules of XerC and two molecules of XerD.</text>
</comment>
<comment type="subcellular location">
    <subcellularLocation>
        <location evidence="1">Cytoplasm</location>
    </subcellularLocation>
</comment>
<comment type="similarity">
    <text evidence="1">Belongs to the 'phage' integrase family. XerD subfamily.</text>
</comment>
<dbReference type="EMBL" id="CP000046">
    <property type="protein sequence ID" value="AAW36733.1"/>
    <property type="molecule type" value="Genomic_DNA"/>
</dbReference>
<dbReference type="RefSeq" id="WP_000447733.1">
    <property type="nucleotide sequence ID" value="NZ_JBGOFO010000003.1"/>
</dbReference>
<dbReference type="SMR" id="Q5HFS5"/>
<dbReference type="KEGG" id="sac:SACOL1540"/>
<dbReference type="HOGENOM" id="CLU_027562_9_6_9"/>
<dbReference type="Proteomes" id="UP000000530">
    <property type="component" value="Chromosome"/>
</dbReference>
<dbReference type="GO" id="GO:0005737">
    <property type="term" value="C:cytoplasm"/>
    <property type="evidence" value="ECO:0007669"/>
    <property type="project" value="UniProtKB-SubCell"/>
</dbReference>
<dbReference type="GO" id="GO:0003677">
    <property type="term" value="F:DNA binding"/>
    <property type="evidence" value="ECO:0007669"/>
    <property type="project" value="UniProtKB-KW"/>
</dbReference>
<dbReference type="GO" id="GO:0009037">
    <property type="term" value="F:tyrosine-based site-specific recombinase activity"/>
    <property type="evidence" value="ECO:0007669"/>
    <property type="project" value="UniProtKB-UniRule"/>
</dbReference>
<dbReference type="GO" id="GO:0051301">
    <property type="term" value="P:cell division"/>
    <property type="evidence" value="ECO:0007669"/>
    <property type="project" value="UniProtKB-KW"/>
</dbReference>
<dbReference type="GO" id="GO:0007059">
    <property type="term" value="P:chromosome segregation"/>
    <property type="evidence" value="ECO:0007669"/>
    <property type="project" value="UniProtKB-UniRule"/>
</dbReference>
<dbReference type="GO" id="GO:0006313">
    <property type="term" value="P:DNA transposition"/>
    <property type="evidence" value="ECO:0007669"/>
    <property type="project" value="UniProtKB-UniRule"/>
</dbReference>
<dbReference type="CDD" id="cd00798">
    <property type="entry name" value="INT_XerDC_C"/>
    <property type="match status" value="1"/>
</dbReference>
<dbReference type="Gene3D" id="1.10.150.130">
    <property type="match status" value="1"/>
</dbReference>
<dbReference type="Gene3D" id="1.10.443.10">
    <property type="entry name" value="Intergrase catalytic core"/>
    <property type="match status" value="1"/>
</dbReference>
<dbReference type="HAMAP" id="MF_01808">
    <property type="entry name" value="Recomb_XerC_XerD"/>
    <property type="match status" value="1"/>
</dbReference>
<dbReference type="HAMAP" id="MF_01807">
    <property type="entry name" value="Recomb_XerD"/>
    <property type="match status" value="1"/>
</dbReference>
<dbReference type="InterPro" id="IPR044068">
    <property type="entry name" value="CB"/>
</dbReference>
<dbReference type="InterPro" id="IPR011010">
    <property type="entry name" value="DNA_brk_join_enz"/>
</dbReference>
<dbReference type="InterPro" id="IPR013762">
    <property type="entry name" value="Integrase-like_cat_sf"/>
</dbReference>
<dbReference type="InterPro" id="IPR002104">
    <property type="entry name" value="Integrase_catalytic"/>
</dbReference>
<dbReference type="InterPro" id="IPR010998">
    <property type="entry name" value="Integrase_recombinase_N"/>
</dbReference>
<dbReference type="InterPro" id="IPR004107">
    <property type="entry name" value="Integrase_SAM-like_N"/>
</dbReference>
<dbReference type="InterPro" id="IPR011932">
    <property type="entry name" value="Recomb_XerD"/>
</dbReference>
<dbReference type="InterPro" id="IPR023009">
    <property type="entry name" value="Tyrosine_recombinase_XerC/XerD"/>
</dbReference>
<dbReference type="InterPro" id="IPR050090">
    <property type="entry name" value="Tyrosine_recombinase_XerCD"/>
</dbReference>
<dbReference type="NCBIfam" id="NF001399">
    <property type="entry name" value="PRK00283.1"/>
    <property type="match status" value="1"/>
</dbReference>
<dbReference type="NCBIfam" id="NF040815">
    <property type="entry name" value="recomb_XerA_Arch"/>
    <property type="match status" value="1"/>
</dbReference>
<dbReference type="NCBIfam" id="TIGR02225">
    <property type="entry name" value="recomb_XerD"/>
    <property type="match status" value="1"/>
</dbReference>
<dbReference type="PANTHER" id="PTHR30349">
    <property type="entry name" value="PHAGE INTEGRASE-RELATED"/>
    <property type="match status" value="1"/>
</dbReference>
<dbReference type="PANTHER" id="PTHR30349:SF81">
    <property type="entry name" value="TYROSINE RECOMBINASE XERC"/>
    <property type="match status" value="1"/>
</dbReference>
<dbReference type="Pfam" id="PF02899">
    <property type="entry name" value="Phage_int_SAM_1"/>
    <property type="match status" value="1"/>
</dbReference>
<dbReference type="Pfam" id="PF00589">
    <property type="entry name" value="Phage_integrase"/>
    <property type="match status" value="1"/>
</dbReference>
<dbReference type="SUPFAM" id="SSF56349">
    <property type="entry name" value="DNA breaking-rejoining enzymes"/>
    <property type="match status" value="1"/>
</dbReference>
<dbReference type="PROSITE" id="PS51900">
    <property type="entry name" value="CB"/>
    <property type="match status" value="1"/>
</dbReference>
<dbReference type="PROSITE" id="PS51898">
    <property type="entry name" value="TYR_RECOMBINASE"/>
    <property type="match status" value="1"/>
</dbReference>
<name>XERD_STAAC</name>
<accession>Q5HFS5</accession>
<keyword id="KW-0131">Cell cycle</keyword>
<keyword id="KW-0132">Cell division</keyword>
<keyword id="KW-0159">Chromosome partition</keyword>
<keyword id="KW-0963">Cytoplasm</keyword>
<keyword id="KW-0229">DNA integration</keyword>
<keyword id="KW-0233">DNA recombination</keyword>
<keyword id="KW-0238">DNA-binding</keyword>
<gene>
    <name evidence="1" type="primary">xerD</name>
    <name type="ordered locus">SACOL1540</name>
</gene>
<evidence type="ECO:0000255" key="1">
    <source>
        <dbReference type="HAMAP-Rule" id="MF_01807"/>
    </source>
</evidence>
<evidence type="ECO:0000255" key="2">
    <source>
        <dbReference type="PROSITE-ProRule" id="PRU01246"/>
    </source>
</evidence>
<evidence type="ECO:0000255" key="3">
    <source>
        <dbReference type="PROSITE-ProRule" id="PRU01248"/>
    </source>
</evidence>
<feature type="chain" id="PRO_0000095416" description="Tyrosine recombinase XerD">
    <location>
        <begin position="1"/>
        <end position="295"/>
    </location>
</feature>
<feature type="domain" description="Core-binding (CB)" evidence="3">
    <location>
        <begin position="1"/>
        <end position="85"/>
    </location>
</feature>
<feature type="domain" description="Tyr recombinase" evidence="2">
    <location>
        <begin position="106"/>
        <end position="289"/>
    </location>
</feature>
<feature type="active site" evidence="1">
    <location>
        <position position="146"/>
    </location>
</feature>
<feature type="active site" evidence="1">
    <location>
        <position position="170"/>
    </location>
</feature>
<feature type="active site" evidence="1">
    <location>
        <position position="241"/>
    </location>
</feature>
<feature type="active site" evidence="1">
    <location>
        <position position="244"/>
    </location>
</feature>
<feature type="active site" evidence="1">
    <location>
        <position position="267"/>
    </location>
</feature>
<feature type="active site" description="O-(3'-phospho-DNA)-tyrosine intermediate" evidence="1">
    <location>
        <position position="276"/>
    </location>
</feature>